<protein>
    <recommendedName>
        <fullName evidence="1">Large ribosomal subunit protein bL31</fullName>
    </recommendedName>
    <alternativeName>
        <fullName evidence="2">50S ribosomal protein L31</fullName>
    </alternativeName>
</protein>
<dbReference type="EMBL" id="AE005174">
    <property type="protein sequence ID" value="AAG59131.1"/>
    <property type="molecule type" value="Genomic_DNA"/>
</dbReference>
<dbReference type="EMBL" id="BA000007">
    <property type="protein sequence ID" value="BAB38286.1"/>
    <property type="molecule type" value="Genomic_DNA"/>
</dbReference>
<dbReference type="PIR" id="G86083">
    <property type="entry name" value="G86083"/>
</dbReference>
<dbReference type="PIR" id="G91236">
    <property type="entry name" value="G91236"/>
</dbReference>
<dbReference type="RefSeq" id="NP_312890.1">
    <property type="nucleotide sequence ID" value="NC_002695.1"/>
</dbReference>
<dbReference type="RefSeq" id="WP_000710769.1">
    <property type="nucleotide sequence ID" value="NZ_VOAI01000016.1"/>
</dbReference>
<dbReference type="EMDB" id="EMD-42504"/>
<dbReference type="EMDB" id="EMD-43929"/>
<dbReference type="EMDB" id="EMD-45569"/>
<dbReference type="EMDB" id="EMD-45572"/>
<dbReference type="EMDB" id="EMD-45573"/>
<dbReference type="SMR" id="P0A7N0"/>
<dbReference type="STRING" id="155864.Z5484"/>
<dbReference type="GeneID" id="915027"/>
<dbReference type="GeneID" id="93777962"/>
<dbReference type="KEGG" id="ece:Z5484"/>
<dbReference type="KEGG" id="ecs:ECs_4863"/>
<dbReference type="PATRIC" id="fig|386585.9.peg.5085"/>
<dbReference type="eggNOG" id="COG0254">
    <property type="taxonomic scope" value="Bacteria"/>
</dbReference>
<dbReference type="HOGENOM" id="CLU_114306_4_3_6"/>
<dbReference type="OMA" id="IHVDVWS"/>
<dbReference type="Proteomes" id="UP000000558">
    <property type="component" value="Chromosome"/>
</dbReference>
<dbReference type="Proteomes" id="UP000002519">
    <property type="component" value="Chromosome"/>
</dbReference>
<dbReference type="GO" id="GO:1990904">
    <property type="term" value="C:ribonucleoprotein complex"/>
    <property type="evidence" value="ECO:0007669"/>
    <property type="project" value="UniProtKB-KW"/>
</dbReference>
<dbReference type="GO" id="GO:0005840">
    <property type="term" value="C:ribosome"/>
    <property type="evidence" value="ECO:0007669"/>
    <property type="project" value="UniProtKB-KW"/>
</dbReference>
<dbReference type="GO" id="GO:0046872">
    <property type="term" value="F:metal ion binding"/>
    <property type="evidence" value="ECO:0007669"/>
    <property type="project" value="UniProtKB-KW"/>
</dbReference>
<dbReference type="GO" id="GO:0019843">
    <property type="term" value="F:rRNA binding"/>
    <property type="evidence" value="ECO:0007669"/>
    <property type="project" value="UniProtKB-KW"/>
</dbReference>
<dbReference type="GO" id="GO:0003735">
    <property type="term" value="F:structural constituent of ribosome"/>
    <property type="evidence" value="ECO:0007669"/>
    <property type="project" value="InterPro"/>
</dbReference>
<dbReference type="GO" id="GO:0006412">
    <property type="term" value="P:translation"/>
    <property type="evidence" value="ECO:0007669"/>
    <property type="project" value="UniProtKB-UniRule"/>
</dbReference>
<dbReference type="FunFam" id="4.10.830.30:FF:000001">
    <property type="entry name" value="50S ribosomal protein L31"/>
    <property type="match status" value="1"/>
</dbReference>
<dbReference type="Gene3D" id="4.10.830.30">
    <property type="entry name" value="Ribosomal protein L31"/>
    <property type="match status" value="1"/>
</dbReference>
<dbReference type="HAMAP" id="MF_00501">
    <property type="entry name" value="Ribosomal_bL31_1"/>
    <property type="match status" value="1"/>
</dbReference>
<dbReference type="InterPro" id="IPR034704">
    <property type="entry name" value="Ribosomal_bL28/bL31-like_sf"/>
</dbReference>
<dbReference type="InterPro" id="IPR002150">
    <property type="entry name" value="Ribosomal_bL31"/>
</dbReference>
<dbReference type="InterPro" id="IPR027491">
    <property type="entry name" value="Ribosomal_bL31_A"/>
</dbReference>
<dbReference type="InterPro" id="IPR042105">
    <property type="entry name" value="Ribosomal_bL31_sf"/>
</dbReference>
<dbReference type="NCBIfam" id="TIGR00105">
    <property type="entry name" value="L31"/>
    <property type="match status" value="1"/>
</dbReference>
<dbReference type="NCBIfam" id="NF000612">
    <property type="entry name" value="PRK00019.1"/>
    <property type="match status" value="1"/>
</dbReference>
<dbReference type="NCBIfam" id="NF001809">
    <property type="entry name" value="PRK00528.1"/>
    <property type="match status" value="1"/>
</dbReference>
<dbReference type="PANTHER" id="PTHR33280">
    <property type="entry name" value="50S RIBOSOMAL PROTEIN L31, CHLOROPLASTIC"/>
    <property type="match status" value="1"/>
</dbReference>
<dbReference type="PANTHER" id="PTHR33280:SF6">
    <property type="entry name" value="LARGE RIBOSOMAL SUBUNIT PROTEIN BL31A"/>
    <property type="match status" value="1"/>
</dbReference>
<dbReference type="Pfam" id="PF01197">
    <property type="entry name" value="Ribosomal_L31"/>
    <property type="match status" value="1"/>
</dbReference>
<dbReference type="PRINTS" id="PR01249">
    <property type="entry name" value="RIBOSOMALL31"/>
</dbReference>
<dbReference type="SUPFAM" id="SSF143800">
    <property type="entry name" value="L28p-like"/>
    <property type="match status" value="1"/>
</dbReference>
<dbReference type="PROSITE" id="PS01143">
    <property type="entry name" value="RIBOSOMAL_L31"/>
    <property type="match status" value="1"/>
</dbReference>
<comment type="function">
    <text evidence="1">Binds the 23S rRNA.</text>
</comment>
<comment type="cofactor">
    <cofactor evidence="1">
        <name>Zn(2+)</name>
        <dbReference type="ChEBI" id="CHEBI:29105"/>
    </cofactor>
    <text evidence="1">Binds 1 zinc ion per subunit.</text>
</comment>
<comment type="subunit">
    <text evidence="1">Part of the 50S ribosomal subunit.</text>
</comment>
<comment type="similarity">
    <text evidence="1">Belongs to the bacterial ribosomal protein bL31 family. Type A subfamily.</text>
</comment>
<feature type="chain" id="PRO_0000173104" description="Large ribosomal subunit protein bL31">
    <location>
        <begin position="1"/>
        <end position="70"/>
    </location>
</feature>
<feature type="binding site" evidence="1">
    <location>
        <position position="16"/>
    </location>
    <ligand>
        <name>Zn(2+)</name>
        <dbReference type="ChEBI" id="CHEBI:29105"/>
    </ligand>
</feature>
<feature type="binding site" evidence="1">
    <location>
        <position position="18"/>
    </location>
    <ligand>
        <name>Zn(2+)</name>
        <dbReference type="ChEBI" id="CHEBI:29105"/>
    </ligand>
</feature>
<feature type="binding site" evidence="1">
    <location>
        <position position="37"/>
    </location>
    <ligand>
        <name>Zn(2+)</name>
        <dbReference type="ChEBI" id="CHEBI:29105"/>
    </ligand>
</feature>
<feature type="binding site" evidence="1">
    <location>
        <position position="40"/>
    </location>
    <ligand>
        <name>Zn(2+)</name>
        <dbReference type="ChEBI" id="CHEBI:29105"/>
    </ligand>
</feature>
<feature type="modified residue" description="N6-acetyllysine" evidence="1">
    <location>
        <position position="8"/>
    </location>
</feature>
<reference key="1">
    <citation type="journal article" date="2001" name="Nature">
        <title>Genome sequence of enterohaemorrhagic Escherichia coli O157:H7.</title>
        <authorList>
            <person name="Perna N.T."/>
            <person name="Plunkett G. III"/>
            <person name="Burland V."/>
            <person name="Mau B."/>
            <person name="Glasner J.D."/>
            <person name="Rose D.J."/>
            <person name="Mayhew G.F."/>
            <person name="Evans P.S."/>
            <person name="Gregor J."/>
            <person name="Kirkpatrick H.A."/>
            <person name="Posfai G."/>
            <person name="Hackett J."/>
            <person name="Klink S."/>
            <person name="Boutin A."/>
            <person name="Shao Y."/>
            <person name="Miller L."/>
            <person name="Grotbeck E.J."/>
            <person name="Davis N.W."/>
            <person name="Lim A."/>
            <person name="Dimalanta E.T."/>
            <person name="Potamousis K."/>
            <person name="Apodaca J."/>
            <person name="Anantharaman T.S."/>
            <person name="Lin J."/>
            <person name="Yen G."/>
            <person name="Schwartz D.C."/>
            <person name="Welch R.A."/>
            <person name="Blattner F.R."/>
        </authorList>
    </citation>
    <scope>NUCLEOTIDE SEQUENCE [LARGE SCALE GENOMIC DNA]</scope>
    <source>
        <strain>O157:H7 / EDL933 / ATCC 700927 / EHEC</strain>
    </source>
</reference>
<reference key="2">
    <citation type="journal article" date="2001" name="DNA Res.">
        <title>Complete genome sequence of enterohemorrhagic Escherichia coli O157:H7 and genomic comparison with a laboratory strain K-12.</title>
        <authorList>
            <person name="Hayashi T."/>
            <person name="Makino K."/>
            <person name="Ohnishi M."/>
            <person name="Kurokawa K."/>
            <person name="Ishii K."/>
            <person name="Yokoyama K."/>
            <person name="Han C.-G."/>
            <person name="Ohtsubo E."/>
            <person name="Nakayama K."/>
            <person name="Murata T."/>
            <person name="Tanaka M."/>
            <person name="Tobe T."/>
            <person name="Iida T."/>
            <person name="Takami H."/>
            <person name="Honda T."/>
            <person name="Sasakawa C."/>
            <person name="Ogasawara N."/>
            <person name="Yasunaga T."/>
            <person name="Kuhara S."/>
            <person name="Shiba T."/>
            <person name="Hattori M."/>
            <person name="Shinagawa H."/>
        </authorList>
    </citation>
    <scope>NUCLEOTIDE SEQUENCE [LARGE SCALE GENOMIC DNA]</scope>
    <source>
        <strain>O157:H7 / Sakai / RIMD 0509952 / EHEC</strain>
    </source>
</reference>
<accession>P0A7N0</accession>
<accession>P02432</accession>
<organism>
    <name type="scientific">Escherichia coli O157:H7</name>
    <dbReference type="NCBI Taxonomy" id="83334"/>
    <lineage>
        <taxon>Bacteria</taxon>
        <taxon>Pseudomonadati</taxon>
        <taxon>Pseudomonadota</taxon>
        <taxon>Gammaproteobacteria</taxon>
        <taxon>Enterobacterales</taxon>
        <taxon>Enterobacteriaceae</taxon>
        <taxon>Escherichia</taxon>
    </lineage>
</organism>
<proteinExistence type="inferred from homology"/>
<gene>
    <name evidence="1" type="primary">rpmE</name>
    <name type="ordered locus">Z5484</name>
    <name type="ordered locus">ECs4863</name>
</gene>
<name>RL31_ECO57</name>
<keyword id="KW-0007">Acetylation</keyword>
<keyword id="KW-0479">Metal-binding</keyword>
<keyword id="KW-1185">Reference proteome</keyword>
<keyword id="KW-0687">Ribonucleoprotein</keyword>
<keyword id="KW-0689">Ribosomal protein</keyword>
<keyword id="KW-0694">RNA-binding</keyword>
<keyword id="KW-0699">rRNA-binding</keyword>
<keyword id="KW-0862">Zinc</keyword>
<evidence type="ECO:0000255" key="1">
    <source>
        <dbReference type="HAMAP-Rule" id="MF_00501"/>
    </source>
</evidence>
<evidence type="ECO:0000305" key="2"/>
<sequence>MKKDIHPKYEEITASCSCGNVMKIRSTVGHDLNLDVCSKCHPFFTGKQRDVATGGRVDRFNKRFNIPGSK</sequence>